<keyword id="KW-1185">Reference proteome</keyword>
<keyword id="KW-0677">Repeat</keyword>
<accession>Q9SH26</accession>
<organism>
    <name type="scientific">Arabidopsis thaliana</name>
    <name type="common">Mouse-ear cress</name>
    <dbReference type="NCBI Taxonomy" id="3702"/>
    <lineage>
        <taxon>Eukaryota</taxon>
        <taxon>Viridiplantae</taxon>
        <taxon>Streptophyta</taxon>
        <taxon>Embryophyta</taxon>
        <taxon>Tracheophyta</taxon>
        <taxon>Spermatophyta</taxon>
        <taxon>Magnoliopsida</taxon>
        <taxon>eudicotyledons</taxon>
        <taxon>Gunneridae</taxon>
        <taxon>Pentapetalae</taxon>
        <taxon>rosids</taxon>
        <taxon>malvids</taxon>
        <taxon>Brassicales</taxon>
        <taxon>Brassicaceae</taxon>
        <taxon>Camelineae</taxon>
        <taxon>Arabidopsis</taxon>
    </lineage>
</organism>
<feature type="chain" id="PRO_0000342843" description="Pentatricopeptide repeat-containing protein At1g63400">
    <location>
        <begin position="1"/>
        <end position="577"/>
    </location>
</feature>
<feature type="repeat" description="PPR 1">
    <location>
        <begin position="49"/>
        <end position="83"/>
    </location>
</feature>
<feature type="repeat" description="PPR 2">
    <location>
        <begin position="84"/>
        <end position="118"/>
    </location>
</feature>
<feature type="repeat" description="PPR 3">
    <location>
        <begin position="119"/>
        <end position="153"/>
    </location>
</feature>
<feature type="repeat" description="PPR 4">
    <location>
        <begin position="154"/>
        <end position="188"/>
    </location>
</feature>
<feature type="repeat" description="PPR 5">
    <location>
        <begin position="189"/>
        <end position="223"/>
    </location>
</feature>
<feature type="repeat" description="PPR 6">
    <location>
        <begin position="224"/>
        <end position="258"/>
    </location>
</feature>
<feature type="repeat" description="PPR 7">
    <location>
        <begin position="259"/>
        <end position="293"/>
    </location>
</feature>
<feature type="repeat" description="PPR 8">
    <location>
        <begin position="294"/>
        <end position="328"/>
    </location>
</feature>
<feature type="repeat" description="PPR 9">
    <location>
        <begin position="329"/>
        <end position="363"/>
    </location>
</feature>
<feature type="repeat" description="PPR 10">
    <location>
        <begin position="364"/>
        <end position="398"/>
    </location>
</feature>
<feature type="repeat" description="PPR 11">
    <location>
        <begin position="399"/>
        <end position="433"/>
    </location>
</feature>
<feature type="repeat" description="PPR 12">
    <location>
        <begin position="434"/>
        <end position="468"/>
    </location>
</feature>
<feature type="repeat" description="PPR 13">
    <location>
        <begin position="469"/>
        <end position="503"/>
    </location>
</feature>
<feature type="repeat" description="PPR 14">
    <location>
        <begin position="504"/>
        <end position="538"/>
    </location>
</feature>
<feature type="repeat" description="PPR 15">
    <location>
        <begin position="539"/>
        <end position="573"/>
    </location>
</feature>
<reference key="1">
    <citation type="journal article" date="2000" name="Nature">
        <title>Sequence and analysis of chromosome 1 of the plant Arabidopsis thaliana.</title>
        <authorList>
            <person name="Theologis A."/>
            <person name="Ecker J.R."/>
            <person name="Palm C.J."/>
            <person name="Federspiel N.A."/>
            <person name="Kaul S."/>
            <person name="White O."/>
            <person name="Alonso J."/>
            <person name="Altafi H."/>
            <person name="Araujo R."/>
            <person name="Bowman C.L."/>
            <person name="Brooks S.Y."/>
            <person name="Buehler E."/>
            <person name="Chan A."/>
            <person name="Chao Q."/>
            <person name="Chen H."/>
            <person name="Cheuk R.F."/>
            <person name="Chin C.W."/>
            <person name="Chung M.K."/>
            <person name="Conn L."/>
            <person name="Conway A.B."/>
            <person name="Conway A.R."/>
            <person name="Creasy T.H."/>
            <person name="Dewar K."/>
            <person name="Dunn P."/>
            <person name="Etgu P."/>
            <person name="Feldblyum T.V."/>
            <person name="Feng J.-D."/>
            <person name="Fong B."/>
            <person name="Fujii C.Y."/>
            <person name="Gill J.E."/>
            <person name="Goldsmith A.D."/>
            <person name="Haas B."/>
            <person name="Hansen N.F."/>
            <person name="Hughes B."/>
            <person name="Huizar L."/>
            <person name="Hunter J.L."/>
            <person name="Jenkins J."/>
            <person name="Johnson-Hopson C."/>
            <person name="Khan S."/>
            <person name="Khaykin E."/>
            <person name="Kim C.J."/>
            <person name="Koo H.L."/>
            <person name="Kremenetskaia I."/>
            <person name="Kurtz D.B."/>
            <person name="Kwan A."/>
            <person name="Lam B."/>
            <person name="Langin-Hooper S."/>
            <person name="Lee A."/>
            <person name="Lee J.M."/>
            <person name="Lenz C.A."/>
            <person name="Li J.H."/>
            <person name="Li Y.-P."/>
            <person name="Lin X."/>
            <person name="Liu S.X."/>
            <person name="Liu Z.A."/>
            <person name="Luros J.S."/>
            <person name="Maiti R."/>
            <person name="Marziali A."/>
            <person name="Militscher J."/>
            <person name="Miranda M."/>
            <person name="Nguyen M."/>
            <person name="Nierman W.C."/>
            <person name="Osborne B.I."/>
            <person name="Pai G."/>
            <person name="Peterson J."/>
            <person name="Pham P.K."/>
            <person name="Rizzo M."/>
            <person name="Rooney T."/>
            <person name="Rowley D."/>
            <person name="Sakano H."/>
            <person name="Salzberg S.L."/>
            <person name="Schwartz J.R."/>
            <person name="Shinn P."/>
            <person name="Southwick A.M."/>
            <person name="Sun H."/>
            <person name="Tallon L.J."/>
            <person name="Tambunga G."/>
            <person name="Toriumi M.J."/>
            <person name="Town C.D."/>
            <person name="Utterback T."/>
            <person name="Van Aken S."/>
            <person name="Vaysberg M."/>
            <person name="Vysotskaia V.S."/>
            <person name="Walker M."/>
            <person name="Wu D."/>
            <person name="Yu G."/>
            <person name="Fraser C.M."/>
            <person name="Venter J.C."/>
            <person name="Davis R.W."/>
        </authorList>
    </citation>
    <scope>NUCLEOTIDE SEQUENCE [LARGE SCALE GENOMIC DNA]</scope>
    <source>
        <strain>cv. Columbia</strain>
    </source>
</reference>
<reference key="2">
    <citation type="journal article" date="2017" name="Plant J.">
        <title>Araport11: a complete reannotation of the Arabidopsis thaliana reference genome.</title>
        <authorList>
            <person name="Cheng C.Y."/>
            <person name="Krishnakumar V."/>
            <person name="Chan A.P."/>
            <person name="Thibaud-Nissen F."/>
            <person name="Schobel S."/>
            <person name="Town C.D."/>
        </authorList>
    </citation>
    <scope>GENOME REANNOTATION</scope>
    <source>
        <strain>cv. Columbia</strain>
    </source>
</reference>
<reference key="3">
    <citation type="journal article" date="2004" name="Plant Cell">
        <title>Genome-wide analysis of Arabidopsis pentatricopeptide repeat proteins reveals their essential role in organelle biogenesis.</title>
        <authorList>
            <person name="Lurin C."/>
            <person name="Andres C."/>
            <person name="Aubourg S."/>
            <person name="Bellaoui M."/>
            <person name="Bitton F."/>
            <person name="Bruyere C."/>
            <person name="Caboche M."/>
            <person name="Debast C."/>
            <person name="Gualberto J."/>
            <person name="Hoffmann B."/>
            <person name="Lecharny A."/>
            <person name="Le Ret M."/>
            <person name="Martin-Magniette M.-L."/>
            <person name="Mireau H."/>
            <person name="Peeters N."/>
            <person name="Renou J.-P."/>
            <person name="Szurek B."/>
            <person name="Taconnat L."/>
            <person name="Small I."/>
        </authorList>
    </citation>
    <scope>GENE FAMILY</scope>
</reference>
<dbReference type="EMBL" id="AC008047">
    <property type="protein sequence ID" value="AAF19704.1"/>
    <property type="molecule type" value="Genomic_DNA"/>
</dbReference>
<dbReference type="EMBL" id="CP002684">
    <property type="protein sequence ID" value="AEE34095.1"/>
    <property type="molecule type" value="Genomic_DNA"/>
</dbReference>
<dbReference type="PIR" id="H96659">
    <property type="entry name" value="H96659"/>
</dbReference>
<dbReference type="RefSeq" id="NP_176529.1">
    <property type="nucleotide sequence ID" value="NM_105019.2"/>
</dbReference>
<dbReference type="SMR" id="Q9SH26"/>
<dbReference type="FunCoup" id="Q9SH26">
    <property type="interactions" value="21"/>
</dbReference>
<dbReference type="STRING" id="3702.Q9SH26"/>
<dbReference type="iPTMnet" id="Q9SH26"/>
<dbReference type="PaxDb" id="3702-AT1G63400.1"/>
<dbReference type="ProteomicsDB" id="250574"/>
<dbReference type="EnsemblPlants" id="AT1G63400.1">
    <property type="protein sequence ID" value="AT1G63400.1"/>
    <property type="gene ID" value="AT1G63400"/>
</dbReference>
<dbReference type="GeneID" id="842646"/>
<dbReference type="Gramene" id="AT1G63400.1">
    <property type="protein sequence ID" value="AT1G63400.1"/>
    <property type="gene ID" value="AT1G63400"/>
</dbReference>
<dbReference type="KEGG" id="ath:AT1G63400"/>
<dbReference type="Araport" id="AT1G63400"/>
<dbReference type="TAIR" id="AT1G63400"/>
<dbReference type="eggNOG" id="KOG4197">
    <property type="taxonomic scope" value="Eukaryota"/>
</dbReference>
<dbReference type="HOGENOM" id="CLU_002706_49_0_1"/>
<dbReference type="InParanoid" id="Q9SH26"/>
<dbReference type="OMA" id="LSIVCYN"/>
<dbReference type="PhylomeDB" id="Q9SH26"/>
<dbReference type="PRO" id="PR:Q9SH26"/>
<dbReference type="Proteomes" id="UP000006548">
    <property type="component" value="Chromosome 1"/>
</dbReference>
<dbReference type="ExpressionAtlas" id="Q9SH26">
    <property type="expression patterns" value="baseline and differential"/>
</dbReference>
<dbReference type="FunFam" id="1.25.40.10:FF:002096">
    <property type="entry name" value="Pentatricopeptide repeat-containing protein At1g62720"/>
    <property type="match status" value="1"/>
</dbReference>
<dbReference type="FunFam" id="1.25.40.10:FF:002115">
    <property type="entry name" value="Pentatricopeptide repeat-containing protein At1g62720"/>
    <property type="match status" value="1"/>
</dbReference>
<dbReference type="FunFam" id="1.25.40.10:FF:000558">
    <property type="entry name" value="Pentatricopeptide repeat-containing protein At5g39710"/>
    <property type="match status" value="1"/>
</dbReference>
<dbReference type="Gene3D" id="1.25.40.10">
    <property type="entry name" value="Tetratricopeptide repeat domain"/>
    <property type="match status" value="7"/>
</dbReference>
<dbReference type="InterPro" id="IPR002885">
    <property type="entry name" value="Pentatricopeptide_rpt"/>
</dbReference>
<dbReference type="InterPro" id="IPR011990">
    <property type="entry name" value="TPR-like_helical_dom_sf"/>
</dbReference>
<dbReference type="NCBIfam" id="TIGR00756">
    <property type="entry name" value="PPR"/>
    <property type="match status" value="13"/>
</dbReference>
<dbReference type="PANTHER" id="PTHR47936">
    <property type="entry name" value="PPR_LONG DOMAIN-CONTAINING PROTEIN"/>
    <property type="match status" value="1"/>
</dbReference>
<dbReference type="PANTHER" id="PTHR47936:SF7">
    <property type="entry name" value="TETRATRICOPEPTIDE-LIKE HELICAL DOMAIN SUPERFAMILY"/>
    <property type="match status" value="1"/>
</dbReference>
<dbReference type="Pfam" id="PF12854">
    <property type="entry name" value="PPR_1"/>
    <property type="match status" value="1"/>
</dbReference>
<dbReference type="Pfam" id="PF13041">
    <property type="entry name" value="PPR_2"/>
    <property type="match status" value="6"/>
</dbReference>
<dbReference type="SUPFAM" id="SSF81901">
    <property type="entry name" value="HCP-like"/>
    <property type="match status" value="1"/>
</dbReference>
<dbReference type="PROSITE" id="PS51375">
    <property type="entry name" value="PPR"/>
    <property type="match status" value="15"/>
</dbReference>
<gene>
    <name type="ordered locus">At1g63400</name>
    <name type="ORF">F2K11.22</name>
</gene>
<name>PP102_ARATH</name>
<protein>
    <recommendedName>
        <fullName>Pentatricopeptide repeat-containing protein At1g63400</fullName>
    </recommendedName>
</protein>
<comment type="similarity">
    <text evidence="1">Belongs to the PPR family. P subfamily.</text>
</comment>
<comment type="online information" name="Pentatricopeptide repeat proteins">
    <link uri="https://ppr.plantenergy.uwa.edu.au"/>
</comment>
<sequence>MRISISSVVSSTTSRFVHRNLQGKGNPRIAPSSIDLCGMCYWGRAFSSGSGDYREILRNGLHSMKLDDAIGLFGGMVKSRPLPSIFEFNKLLSAIAKMKKFDLVISLGEKMQRLGISHNLYTYNILINCFCRRSQISLALALLGKMMKLGYEPSIVTLSSLLNGYCHGKRISDAVALVDQMVEMGYRPDTITFTTLIHGLFLHNKASEAVALVDRMVQRGCQPNLVTYGVVVNGLCKRGDIDLAFNLLNKMEAAKIEANVVIYSTVIDSLCKYRHEDDALNLFTEMENKGVRPNVITYSSLISCLCNYERWSDASRLLSDMIERKINPNVVTFNALIDAFVKEGKLVEAEKLYDEMIKRSIDPDIFTYSSLINGFCMHDRLDEAKHMFELMISKDCFPNVVTYNTLINGFCKAKRIDEGVELFREMSQRGLVGNTVTYTTLIHGFFQARDCDNAQMVFKQMVSDGVHPNIMTYNTLLDGLCKNGKLEKAMVVFEYLQRSKMEPTIYTYNIMIEGMCKAGKVEDGWDLFCSLSLKGVKPDVIIYNTMISGFCRKGLKEEADALFRKMREDGPLPDSGT</sequence>
<proteinExistence type="evidence at transcript level"/>
<evidence type="ECO:0000305" key="1"/>